<protein>
    <recommendedName>
        <fullName>Thymosin beta-4</fullName>
        <shortName>T beta-4</shortName>
    </recommendedName>
    <component>
        <recommendedName>
            <fullName evidence="4">Hemoregulatory peptide AcSDKP</fullName>
        </recommendedName>
        <alternativeName>
            <fullName>N-acetyl-SDKP</fullName>
            <shortName>AcSDKP</shortName>
        </alternativeName>
        <alternativeName>
            <fullName evidence="2">Seraspenide</fullName>
        </alternativeName>
    </component>
</protein>
<name>TYB4_PIG</name>
<reference key="1">
    <citation type="submission" date="1995-07" db="EMBL/GenBank/DDBJ databases">
        <title>Evaluation and characterization of a porcine small intestine cDNA library.</title>
        <authorList>
            <person name="Winteroe A.K."/>
            <person name="Fredholm M."/>
            <person name="Davies W."/>
        </authorList>
    </citation>
    <scope>NUCLEOTIDE SEQUENCE [LARGE SCALE MRNA]</scope>
    <source>
        <tissue>Small intestine</tissue>
    </source>
</reference>
<reference key="2">
    <citation type="journal article" date="2006" name="J. Anim. Sci.">
        <title>Abundantly expressed genes in pig adipose tissue: an expressed sequence tag approach.</title>
        <authorList>
            <person name="Chen C.H."/>
            <person name="Lin E.C."/>
            <person name="Cheng W.T."/>
            <person name="Sun H.S."/>
            <person name="Mersmann H.J."/>
            <person name="Ding S.T."/>
        </authorList>
    </citation>
    <scope>NUCLEOTIDE SEQUENCE [LARGE SCALE MRNA]</scope>
    <source>
        <strain>Lee-Sung</strain>
        <tissue>Adipose tissue</tissue>
    </source>
</reference>
<gene>
    <name type="primary">TMSB4</name>
</gene>
<sequence length="44" mass="5053">MSDKPDMAEIEKFDKSKLKKTETQEKNPLPSKETIEQEKQAGES</sequence>
<accession>Q95274</accession>
<accession>Q2EN78</accession>
<comment type="function">
    <text evidence="2">Plays an important role in the organization of the cytoskeleton. Binds to and sequesters actin monomers (G actin) and therefore inhibits actin polymerization.</text>
</comment>
<comment type="function">
    <molecule>Hemoregulatory peptide AcSDKP</molecule>
    <text evidence="1">Potent inhibitor of bone marrow derived stem cell differentiation (By similarity). Acts by inhibits the entry of hematopoietic pluripotent stem cells into the S-phase (By similarity).</text>
</comment>
<comment type="subunit">
    <text evidence="1 2">Identified in a complex composed of ACTA1, COBL, GSN AND TMSB4X (By similarity). Interacts with SERPINB1 (By similarity).</text>
</comment>
<comment type="subcellular location">
    <subcellularLocation>
        <location evidence="2">Cytoplasm</location>
        <location evidence="2">Cytoskeleton</location>
    </subcellularLocation>
</comment>
<comment type="PTM">
    <molecule>Hemoregulatory peptide AcSDKP</molecule>
    <text evidence="2">AcSDKP is inactivated by ACE, which removes the dipeptide Lys-Pro from its C-terminus.</text>
</comment>
<comment type="similarity">
    <text evidence="4">Belongs to the thymosin beta family.</text>
</comment>
<comment type="sequence caution" evidence="4">
    <conflict type="erroneous initiation">
        <sequence resource="EMBL-CDS" id="CAB03562"/>
    </conflict>
</comment>
<proteinExistence type="inferred from homology"/>
<keyword id="KW-0007">Acetylation</keyword>
<keyword id="KW-0009">Actin-binding</keyword>
<keyword id="KW-0963">Cytoplasm</keyword>
<keyword id="KW-0206">Cytoskeleton</keyword>
<keyword id="KW-1017">Isopeptide bond</keyword>
<keyword id="KW-0597">Phosphoprotein</keyword>
<keyword id="KW-1185">Reference proteome</keyword>
<keyword id="KW-0832">Ubl conjugation</keyword>
<evidence type="ECO:0000250" key="1">
    <source>
        <dbReference type="UniProtKB" id="P62326"/>
    </source>
</evidence>
<evidence type="ECO:0000250" key="2">
    <source>
        <dbReference type="UniProtKB" id="P62328"/>
    </source>
</evidence>
<evidence type="ECO:0000256" key="3">
    <source>
        <dbReference type="SAM" id="MobiDB-lite"/>
    </source>
</evidence>
<evidence type="ECO:0000305" key="4"/>
<dbReference type="EMBL" id="Z81195">
    <property type="protein sequence ID" value="CAB03562.1"/>
    <property type="status" value="ALT_INIT"/>
    <property type="molecule type" value="mRNA"/>
</dbReference>
<dbReference type="EMBL" id="DQ372079">
    <property type="protein sequence ID" value="ABD18454.1"/>
    <property type="molecule type" value="mRNA"/>
</dbReference>
<dbReference type="RefSeq" id="NP_001038020.1">
    <property type="nucleotide sequence ID" value="NM_001044555.1"/>
</dbReference>
<dbReference type="RefSeq" id="NP_001135463.1">
    <property type="nucleotide sequence ID" value="NM_001141991.1"/>
</dbReference>
<dbReference type="RefSeq" id="XP_005673463.1">
    <property type="nucleotide sequence ID" value="XM_005673406.1"/>
</dbReference>
<dbReference type="SMR" id="Q95274"/>
<dbReference type="FunCoup" id="Q95274">
    <property type="interactions" value="300"/>
</dbReference>
<dbReference type="STRING" id="9823.ENSSSCP00000028545"/>
<dbReference type="PaxDb" id="9823-ENSSSCP00000012901"/>
<dbReference type="PeptideAtlas" id="Q95274"/>
<dbReference type="Ensembl" id="ENSSSCT00000035781.2">
    <property type="protein sequence ID" value="ENSSSCP00000028545.2"/>
    <property type="gene ID" value="ENSSSCG00000012119.5"/>
</dbReference>
<dbReference type="Ensembl" id="ENSSSCT00015093655.1">
    <property type="protein sequence ID" value="ENSSSCP00015038365.1"/>
    <property type="gene ID" value="ENSSSCG00015069888.1"/>
</dbReference>
<dbReference type="Ensembl" id="ENSSSCT00025001905.1">
    <property type="protein sequence ID" value="ENSSSCP00025000601.1"/>
    <property type="gene ID" value="ENSSSCG00025001517.1"/>
</dbReference>
<dbReference type="Ensembl" id="ENSSSCT00030087269.1">
    <property type="protein sequence ID" value="ENSSSCP00030040291.1"/>
    <property type="gene ID" value="ENSSSCG00030062389.1"/>
</dbReference>
<dbReference type="Ensembl" id="ENSSSCT00035003739.1">
    <property type="protein sequence ID" value="ENSSSCP00035001271.1"/>
    <property type="gene ID" value="ENSSSCG00035003010.1"/>
</dbReference>
<dbReference type="Ensembl" id="ENSSSCT00040031990.1">
    <property type="protein sequence ID" value="ENSSSCP00040013275.1"/>
    <property type="gene ID" value="ENSSSCG00040023885.1"/>
</dbReference>
<dbReference type="Ensembl" id="ENSSSCT00045040755.1">
    <property type="protein sequence ID" value="ENSSSCP00045028337.1"/>
    <property type="gene ID" value="ENSSSCG00045023876.1"/>
</dbReference>
<dbReference type="Ensembl" id="ENSSSCT00050023573.1">
    <property type="protein sequence ID" value="ENSSSCP00050009931.1"/>
    <property type="gene ID" value="ENSSSCG00050017316.1"/>
</dbReference>
<dbReference type="Ensembl" id="ENSSSCT00055051639.1">
    <property type="protein sequence ID" value="ENSSSCP00055041265.1"/>
    <property type="gene ID" value="ENSSSCG00055026150.1"/>
</dbReference>
<dbReference type="Ensembl" id="ENSSSCT00060069647.1">
    <property type="protein sequence ID" value="ENSSSCP00060030002.1"/>
    <property type="gene ID" value="ENSSSCG00060051180.1"/>
</dbReference>
<dbReference type="Ensembl" id="ENSSSCT00065070249.1">
    <property type="protein sequence ID" value="ENSSSCP00065030615.1"/>
    <property type="gene ID" value="ENSSSCG00065051287.1"/>
</dbReference>
<dbReference type="Ensembl" id="ENSSSCT00070010343.1">
    <property type="protein sequence ID" value="ENSSSCP00070008488.1"/>
    <property type="gene ID" value="ENSSSCG00070005462.1"/>
</dbReference>
<dbReference type="Ensembl" id="ENSSSCT00070010352.1">
    <property type="protein sequence ID" value="ENSSSCP00070008497.1"/>
    <property type="gene ID" value="ENSSSCG00070005462.1"/>
</dbReference>
<dbReference type="Ensembl" id="ENSSSCT00085006909">
    <property type="protein sequence ID" value="ENSSSCP00085005199"/>
    <property type="gene ID" value="ENSSSCG00085003692"/>
</dbReference>
<dbReference type="Ensembl" id="ENSSSCT00105000592">
    <property type="protein sequence ID" value="ENSSSCP00105000398"/>
    <property type="gene ID" value="ENSSSCG00105000342"/>
</dbReference>
<dbReference type="Ensembl" id="ENSSSCT00115003476">
    <property type="protein sequence ID" value="ENSSSCP00115003189"/>
    <property type="gene ID" value="ENSSSCG00115002088"/>
</dbReference>
<dbReference type="GeneID" id="733606"/>
<dbReference type="KEGG" id="ssc:733606"/>
<dbReference type="CTD" id="7114"/>
<dbReference type="eggNOG" id="KOG4794">
    <property type="taxonomic scope" value="Eukaryota"/>
</dbReference>
<dbReference type="GeneTree" id="ENSGT00940000154433"/>
<dbReference type="HOGENOM" id="CLU_208046_0_0_1"/>
<dbReference type="InParanoid" id="Q95274"/>
<dbReference type="OrthoDB" id="9704985at2759"/>
<dbReference type="Reactome" id="R-SSC-114608">
    <property type="pathway name" value="Platelet degranulation"/>
</dbReference>
<dbReference type="Proteomes" id="UP000008227">
    <property type="component" value="Chromosome X"/>
</dbReference>
<dbReference type="Proteomes" id="UP000314985">
    <property type="component" value="Unassembled WGS sequence"/>
</dbReference>
<dbReference type="Proteomes" id="UP000694570">
    <property type="component" value="Unplaced"/>
</dbReference>
<dbReference type="Proteomes" id="UP000694571">
    <property type="component" value="Unplaced"/>
</dbReference>
<dbReference type="Proteomes" id="UP000694720">
    <property type="component" value="Unplaced"/>
</dbReference>
<dbReference type="Proteomes" id="UP000694722">
    <property type="component" value="Unplaced"/>
</dbReference>
<dbReference type="Proteomes" id="UP000694723">
    <property type="component" value="Unplaced"/>
</dbReference>
<dbReference type="Proteomes" id="UP000694724">
    <property type="component" value="Unplaced"/>
</dbReference>
<dbReference type="Proteomes" id="UP000694725">
    <property type="component" value="Unplaced"/>
</dbReference>
<dbReference type="Proteomes" id="UP000694726">
    <property type="component" value="Unplaced"/>
</dbReference>
<dbReference type="Proteomes" id="UP000694727">
    <property type="component" value="Unplaced"/>
</dbReference>
<dbReference type="Proteomes" id="UP000694728">
    <property type="component" value="Unplaced"/>
</dbReference>
<dbReference type="Bgee" id="ENSSSCG00000012119">
    <property type="expression patterns" value="Expressed in blood and 45 other cell types or tissues"/>
</dbReference>
<dbReference type="ExpressionAtlas" id="Q95274">
    <property type="expression patterns" value="baseline and differential"/>
</dbReference>
<dbReference type="GO" id="GO:0005737">
    <property type="term" value="C:cytoplasm"/>
    <property type="evidence" value="ECO:0000314"/>
    <property type="project" value="CACAO"/>
</dbReference>
<dbReference type="GO" id="GO:0005856">
    <property type="term" value="C:cytoskeleton"/>
    <property type="evidence" value="ECO:0007669"/>
    <property type="project" value="UniProtKB-SubCell"/>
</dbReference>
<dbReference type="GO" id="GO:0005829">
    <property type="term" value="C:cytosol"/>
    <property type="evidence" value="ECO:0007669"/>
    <property type="project" value="Ensembl"/>
</dbReference>
<dbReference type="GO" id="GO:0005634">
    <property type="term" value="C:nucleus"/>
    <property type="evidence" value="ECO:0000314"/>
    <property type="project" value="CACAO"/>
</dbReference>
<dbReference type="GO" id="GO:0003785">
    <property type="term" value="F:actin monomer binding"/>
    <property type="evidence" value="ECO:0000318"/>
    <property type="project" value="GO_Central"/>
</dbReference>
<dbReference type="GO" id="GO:0007015">
    <property type="term" value="P:actin filament organization"/>
    <property type="evidence" value="ECO:0007669"/>
    <property type="project" value="InterPro"/>
</dbReference>
<dbReference type="GO" id="GO:0030334">
    <property type="term" value="P:regulation of cell migration"/>
    <property type="evidence" value="ECO:0000318"/>
    <property type="project" value="GO_Central"/>
</dbReference>
<dbReference type="CDD" id="cd22059">
    <property type="entry name" value="WH2_BetaT"/>
    <property type="match status" value="1"/>
</dbReference>
<dbReference type="FunFam" id="1.20.5.520:FF:000001">
    <property type="entry name" value="Thymosin beta"/>
    <property type="match status" value="1"/>
</dbReference>
<dbReference type="Gene3D" id="1.20.5.520">
    <property type="entry name" value="Single helix bin"/>
    <property type="match status" value="1"/>
</dbReference>
<dbReference type="InterPro" id="IPR001152">
    <property type="entry name" value="Beta-thymosin"/>
</dbReference>
<dbReference type="InterPro" id="IPR038386">
    <property type="entry name" value="Beta-thymosin_sf"/>
</dbReference>
<dbReference type="PANTHER" id="PTHR12021">
    <property type="entry name" value="THYMOSIN BETA"/>
    <property type="match status" value="1"/>
</dbReference>
<dbReference type="PANTHER" id="PTHR12021:SF20">
    <property type="entry name" value="THYMOSIN BETA-4"/>
    <property type="match status" value="1"/>
</dbReference>
<dbReference type="Pfam" id="PF01290">
    <property type="entry name" value="Thymosin"/>
    <property type="match status" value="1"/>
</dbReference>
<dbReference type="PIRSF" id="PIRSF001828">
    <property type="entry name" value="Thymosin_beta"/>
    <property type="match status" value="1"/>
</dbReference>
<dbReference type="SMART" id="SM00152">
    <property type="entry name" value="THY"/>
    <property type="match status" value="1"/>
</dbReference>
<dbReference type="PROSITE" id="PS00500">
    <property type="entry name" value="THYMOSIN_B4"/>
    <property type="match status" value="1"/>
</dbReference>
<organism>
    <name type="scientific">Sus scrofa</name>
    <name type="common">Pig</name>
    <dbReference type="NCBI Taxonomy" id="9823"/>
    <lineage>
        <taxon>Eukaryota</taxon>
        <taxon>Metazoa</taxon>
        <taxon>Chordata</taxon>
        <taxon>Craniata</taxon>
        <taxon>Vertebrata</taxon>
        <taxon>Euteleostomi</taxon>
        <taxon>Mammalia</taxon>
        <taxon>Eutheria</taxon>
        <taxon>Laurasiatheria</taxon>
        <taxon>Artiodactyla</taxon>
        <taxon>Suina</taxon>
        <taxon>Suidae</taxon>
        <taxon>Sus</taxon>
    </lineage>
</organism>
<feature type="initiator methionine" description="Removed" evidence="1">
    <location>
        <position position="1"/>
    </location>
</feature>
<feature type="chain" id="PRO_0000045924" description="Thymosin beta-4">
    <location>
        <begin position="2"/>
        <end position="44"/>
    </location>
</feature>
<feature type="peptide" id="PRO_0000034298" description="Hemoregulatory peptide AcSDKP" evidence="1">
    <location>
        <begin position="2"/>
        <end position="5"/>
    </location>
</feature>
<feature type="region of interest" description="Disordered" evidence="3">
    <location>
        <begin position="1"/>
        <end position="44"/>
    </location>
</feature>
<feature type="compositionally biased region" description="Basic and acidic residues" evidence="3">
    <location>
        <begin position="1"/>
        <end position="25"/>
    </location>
</feature>
<feature type="compositionally biased region" description="Basic and acidic residues" evidence="3">
    <location>
        <begin position="33"/>
        <end position="44"/>
    </location>
</feature>
<feature type="modified residue" description="N-acetylserine" evidence="1">
    <location>
        <position position="2"/>
    </location>
</feature>
<feature type="modified residue" description="Phosphoserine" evidence="2">
    <location>
        <position position="2"/>
    </location>
</feature>
<feature type="modified residue" description="N6-acetyllysine" evidence="2">
    <location>
        <position position="4"/>
    </location>
</feature>
<feature type="modified residue" description="N6-acetyllysine; alternate" evidence="2">
    <location>
        <position position="12"/>
    </location>
</feature>
<feature type="modified residue" description="Phosphothreonine" evidence="2">
    <location>
        <position position="23"/>
    </location>
</feature>
<feature type="modified residue" description="N6-acetyllysine" evidence="2">
    <location>
        <position position="26"/>
    </location>
</feature>
<feature type="modified residue" description="Phosphoserine" evidence="2">
    <location>
        <position position="31"/>
    </location>
</feature>
<feature type="modified residue" description="N6-acetyllysine" evidence="2">
    <location>
        <position position="32"/>
    </location>
</feature>
<feature type="modified residue" description="Phosphothreonine" evidence="2">
    <location>
        <position position="34"/>
    </location>
</feature>
<feature type="modified residue" description="N6-acetyllysine" evidence="2">
    <location>
        <position position="39"/>
    </location>
</feature>
<feature type="cross-link" description="Glycyl lysine isopeptide (Lys-Gly) (interchain with G-Cter in SUMO2); alternate" evidence="2">
    <location>
        <position position="12"/>
    </location>
</feature>
<feature type="unsure residue">
    <location>
        <position position="2"/>
    </location>
</feature>